<proteinExistence type="inferred from homology"/>
<name>LPXD1_ARATH</name>
<organism>
    <name type="scientific">Arabidopsis thaliana</name>
    <name type="common">Mouse-ear cress</name>
    <dbReference type="NCBI Taxonomy" id="3702"/>
    <lineage>
        <taxon>Eukaryota</taxon>
        <taxon>Viridiplantae</taxon>
        <taxon>Streptophyta</taxon>
        <taxon>Embryophyta</taxon>
        <taxon>Tracheophyta</taxon>
        <taxon>Spermatophyta</taxon>
        <taxon>Magnoliopsida</taxon>
        <taxon>eudicotyledons</taxon>
        <taxon>Gunneridae</taxon>
        <taxon>Pentapetalae</taxon>
        <taxon>rosids</taxon>
        <taxon>malvids</taxon>
        <taxon>Brassicales</taxon>
        <taxon>Brassicaceae</taxon>
        <taxon>Camelineae</taxon>
        <taxon>Arabidopsis</taxon>
    </lineage>
</organism>
<evidence type="ECO:0000250" key="1"/>
<evidence type="ECO:0000255" key="2"/>
<evidence type="ECO:0000269" key="3">
    <source>
    </source>
</evidence>
<evidence type="ECO:0000305" key="4"/>
<comment type="function">
    <text evidence="4">Involved in the biosynthesis of lipid A, a phosphorylated glycolipid that in bacteria anchors the lipopolysaccharide to the outer membrane of the cell. Lipid A-like molecules in plants may serve as structural components of the outer membranes of mitochondria and/or chloroplasts, or may be involved in signal transduction or plant defense responses.</text>
</comment>
<comment type="catalytic activity">
    <reaction>
        <text>a UDP-3-O-[(3R)-3-hydroxyacyl]-alpha-D-glucosamine + a (3R)-hydroxyacyl-[ACP] = a UDP-2-N,3-O-bis[(3R)-3-hydroxyacyl]-alpha-D-glucosamine + holo-[ACP] + H(+)</text>
        <dbReference type="Rhea" id="RHEA:53836"/>
        <dbReference type="Rhea" id="RHEA-COMP:9685"/>
        <dbReference type="Rhea" id="RHEA-COMP:9945"/>
        <dbReference type="ChEBI" id="CHEBI:15378"/>
        <dbReference type="ChEBI" id="CHEBI:64479"/>
        <dbReference type="ChEBI" id="CHEBI:78827"/>
        <dbReference type="ChEBI" id="CHEBI:137740"/>
        <dbReference type="ChEBI" id="CHEBI:137748"/>
        <dbReference type="EC" id="2.3.1.191"/>
    </reaction>
</comment>
<comment type="pathway">
    <text evidence="3">Glycolipid biosynthesis; lipid IV(A) biosynthesis; lipid IV(A) from (3R)-3-hydroxytetradecanoyl-[acyl-carrier-protein] and UDP-N-acetyl-alpha-D-glucosamine: step 3/6.</text>
</comment>
<comment type="subunit">
    <text evidence="1">Homotrimer.</text>
</comment>
<comment type="subcellular location">
    <subcellularLocation>
        <location evidence="3">Mitochondrion</location>
    </subcellularLocation>
</comment>
<comment type="disruption phenotype">
    <text evidence="3">No visible phenotype under normal growth conditions, but plants lacking LPXD1 accumulate very low levels of 2,3-diacylglucosamine-1-phosphate.</text>
</comment>
<comment type="similarity">
    <text evidence="4">Belongs to the transferase hexapeptide repeat family. LpxD subfamily.</text>
</comment>
<comment type="sequence caution" evidence="4">
    <conflict type="erroneous gene model prediction">
        <sequence resource="EMBL-CDS" id="CAB81063"/>
    </conflict>
</comment>
<reference key="1">
    <citation type="journal article" date="1999" name="Nature">
        <title>Sequence and analysis of chromosome 4 of the plant Arabidopsis thaliana.</title>
        <authorList>
            <person name="Mayer K.F.X."/>
            <person name="Schueller C."/>
            <person name="Wambutt R."/>
            <person name="Murphy G."/>
            <person name="Volckaert G."/>
            <person name="Pohl T."/>
            <person name="Duesterhoeft A."/>
            <person name="Stiekema W."/>
            <person name="Entian K.-D."/>
            <person name="Terryn N."/>
            <person name="Harris B."/>
            <person name="Ansorge W."/>
            <person name="Brandt P."/>
            <person name="Grivell L.A."/>
            <person name="Rieger M."/>
            <person name="Weichselgartner M."/>
            <person name="de Simone V."/>
            <person name="Obermaier B."/>
            <person name="Mache R."/>
            <person name="Mueller M."/>
            <person name="Kreis M."/>
            <person name="Delseny M."/>
            <person name="Puigdomenech P."/>
            <person name="Watson M."/>
            <person name="Schmidtheini T."/>
            <person name="Reichert B."/>
            <person name="Portetelle D."/>
            <person name="Perez-Alonso M."/>
            <person name="Boutry M."/>
            <person name="Bancroft I."/>
            <person name="Vos P."/>
            <person name="Hoheisel J."/>
            <person name="Zimmermann W."/>
            <person name="Wedler H."/>
            <person name="Ridley P."/>
            <person name="Langham S.-A."/>
            <person name="McCullagh B."/>
            <person name="Bilham L."/>
            <person name="Robben J."/>
            <person name="van der Schueren J."/>
            <person name="Grymonprez B."/>
            <person name="Chuang Y.-J."/>
            <person name="Vandenbussche F."/>
            <person name="Braeken M."/>
            <person name="Weltjens I."/>
            <person name="Voet M."/>
            <person name="Bastiaens I."/>
            <person name="Aert R."/>
            <person name="Defoor E."/>
            <person name="Weitzenegger T."/>
            <person name="Bothe G."/>
            <person name="Ramsperger U."/>
            <person name="Hilbert H."/>
            <person name="Braun M."/>
            <person name="Holzer E."/>
            <person name="Brandt A."/>
            <person name="Peters S."/>
            <person name="van Staveren M."/>
            <person name="Dirkse W."/>
            <person name="Mooijman P."/>
            <person name="Klein Lankhorst R."/>
            <person name="Rose M."/>
            <person name="Hauf J."/>
            <person name="Koetter P."/>
            <person name="Berneiser S."/>
            <person name="Hempel S."/>
            <person name="Feldpausch M."/>
            <person name="Lamberth S."/>
            <person name="Van den Daele H."/>
            <person name="De Keyser A."/>
            <person name="Buysshaert C."/>
            <person name="Gielen J."/>
            <person name="Villarroel R."/>
            <person name="De Clercq R."/>
            <person name="van Montagu M."/>
            <person name="Rogers J."/>
            <person name="Cronin A."/>
            <person name="Quail M.A."/>
            <person name="Bray-Allen S."/>
            <person name="Clark L."/>
            <person name="Doggett J."/>
            <person name="Hall S."/>
            <person name="Kay M."/>
            <person name="Lennard N."/>
            <person name="McLay K."/>
            <person name="Mayes R."/>
            <person name="Pettett A."/>
            <person name="Rajandream M.A."/>
            <person name="Lyne M."/>
            <person name="Benes V."/>
            <person name="Rechmann S."/>
            <person name="Borkova D."/>
            <person name="Bloecker H."/>
            <person name="Scharfe M."/>
            <person name="Grimm M."/>
            <person name="Loehnert T.-H."/>
            <person name="Dose S."/>
            <person name="de Haan M."/>
            <person name="Maarse A.C."/>
            <person name="Schaefer M."/>
            <person name="Mueller-Auer S."/>
            <person name="Gabel C."/>
            <person name="Fuchs M."/>
            <person name="Fartmann B."/>
            <person name="Granderath K."/>
            <person name="Dauner D."/>
            <person name="Herzl A."/>
            <person name="Neumann S."/>
            <person name="Argiriou A."/>
            <person name="Vitale D."/>
            <person name="Liguori R."/>
            <person name="Piravandi E."/>
            <person name="Massenet O."/>
            <person name="Quigley F."/>
            <person name="Clabauld G."/>
            <person name="Muendlein A."/>
            <person name="Felber R."/>
            <person name="Schnabl S."/>
            <person name="Hiller R."/>
            <person name="Schmidt W."/>
            <person name="Lecharny A."/>
            <person name="Aubourg S."/>
            <person name="Chefdor F."/>
            <person name="Cooke R."/>
            <person name="Berger C."/>
            <person name="Monfort A."/>
            <person name="Casacuberta E."/>
            <person name="Gibbons T."/>
            <person name="Weber N."/>
            <person name="Vandenbol M."/>
            <person name="Bargues M."/>
            <person name="Terol J."/>
            <person name="Torres A."/>
            <person name="Perez-Perez A."/>
            <person name="Purnelle B."/>
            <person name="Bent E."/>
            <person name="Johnson S."/>
            <person name="Tacon D."/>
            <person name="Jesse T."/>
            <person name="Heijnen L."/>
            <person name="Schwarz S."/>
            <person name="Scholler P."/>
            <person name="Heber S."/>
            <person name="Francs P."/>
            <person name="Bielke C."/>
            <person name="Frishman D."/>
            <person name="Haase D."/>
            <person name="Lemcke K."/>
            <person name="Mewes H.-W."/>
            <person name="Stocker S."/>
            <person name="Zaccaria P."/>
            <person name="Bevan M."/>
            <person name="Wilson R.K."/>
            <person name="de la Bastide M."/>
            <person name="Habermann K."/>
            <person name="Parnell L."/>
            <person name="Dedhia N."/>
            <person name="Gnoj L."/>
            <person name="Schutz K."/>
            <person name="Huang E."/>
            <person name="Spiegel L."/>
            <person name="Sekhon M."/>
            <person name="Murray J."/>
            <person name="Sheet P."/>
            <person name="Cordes M."/>
            <person name="Abu-Threideh J."/>
            <person name="Stoneking T."/>
            <person name="Kalicki J."/>
            <person name="Graves T."/>
            <person name="Harmon G."/>
            <person name="Edwards J."/>
            <person name="Latreille P."/>
            <person name="Courtney L."/>
            <person name="Cloud J."/>
            <person name="Abbott A."/>
            <person name="Scott K."/>
            <person name="Johnson D."/>
            <person name="Minx P."/>
            <person name="Bentley D."/>
            <person name="Fulton B."/>
            <person name="Miller N."/>
            <person name="Greco T."/>
            <person name="Kemp K."/>
            <person name="Kramer J."/>
            <person name="Fulton L."/>
            <person name="Mardis E."/>
            <person name="Dante M."/>
            <person name="Pepin K."/>
            <person name="Hillier L.W."/>
            <person name="Nelson J."/>
            <person name="Spieth J."/>
            <person name="Ryan E."/>
            <person name="Andrews S."/>
            <person name="Geisel C."/>
            <person name="Layman D."/>
            <person name="Du H."/>
            <person name="Ali J."/>
            <person name="Berghoff A."/>
            <person name="Jones K."/>
            <person name="Drone K."/>
            <person name="Cotton M."/>
            <person name="Joshu C."/>
            <person name="Antonoiu B."/>
            <person name="Zidanic M."/>
            <person name="Strong C."/>
            <person name="Sun H."/>
            <person name="Lamar B."/>
            <person name="Yordan C."/>
            <person name="Ma P."/>
            <person name="Zhong J."/>
            <person name="Preston R."/>
            <person name="Vil D."/>
            <person name="Shekher M."/>
            <person name="Matero A."/>
            <person name="Shah R."/>
            <person name="Swaby I.K."/>
            <person name="O'Shaughnessy A."/>
            <person name="Rodriguez M."/>
            <person name="Hoffman J."/>
            <person name="Till S."/>
            <person name="Granat S."/>
            <person name="Shohdy N."/>
            <person name="Hasegawa A."/>
            <person name="Hameed A."/>
            <person name="Lodhi M."/>
            <person name="Johnson A."/>
            <person name="Chen E."/>
            <person name="Marra M.A."/>
            <person name="Martienssen R."/>
            <person name="McCombie W.R."/>
        </authorList>
    </citation>
    <scope>NUCLEOTIDE SEQUENCE [LARGE SCALE GENOMIC DNA]</scope>
    <source>
        <strain>cv. Columbia</strain>
    </source>
</reference>
<reference key="2">
    <citation type="journal article" date="2017" name="Plant J.">
        <title>Araport11: a complete reannotation of the Arabidopsis thaliana reference genome.</title>
        <authorList>
            <person name="Cheng C.Y."/>
            <person name="Krishnakumar V."/>
            <person name="Chan A.P."/>
            <person name="Thibaud-Nissen F."/>
            <person name="Schobel S."/>
            <person name="Town C.D."/>
        </authorList>
    </citation>
    <scope>GENOME REANNOTATION</scope>
    <source>
        <strain>cv. Columbia</strain>
    </source>
</reference>
<reference key="3">
    <citation type="journal article" date="2011" name="Proc. Natl. Acad. Sci. U.S.A.">
        <title>Pathway for lipid A biosynthesis in Arabidopsis thaliana resembling that of Escherichia coli.</title>
        <authorList>
            <person name="Li C."/>
            <person name="Guan Z."/>
            <person name="Liu D."/>
            <person name="Raetz C.R."/>
        </authorList>
    </citation>
    <scope>PATHWAY</scope>
    <scope>SUBCELLULAR LOCATION</scope>
    <scope>GENE FAMILY</scope>
    <scope>NOMENCLATURE</scope>
    <scope>DISRUPTION PHENOTYPE</scope>
</reference>
<sequence>MANSLRTLFSVSTHGVFLNKRSSYRVRKVFVGMPLRICSEIPRFVSVSCIRSDMCGIMMLGKDVHDLLETSSGGNVEKGFLRWRNGGGMYHRSALIDSSALVEFGAVVHQEAILGAEVHIGSNTVIGSSVKIGPSTKIGNCSIGDLCVIHNGVCIGQDGFGFYVDDNGNMVKKPQTLNVKIGNRVEIGANTCIDRGSWRDTVIGDDTKIDNLVQIGHNVIIGKCCLFCGQVGIAGSAEIGDFVALGGRVAVRDHVSIVSKVRLAANSCVTKNITEPGDYGGFPAYKKTEPDSAFASDKHCFILQKILIQVPIHQWRRQIVEAQISSKRKP</sequence>
<keyword id="KW-0012">Acyltransferase</keyword>
<keyword id="KW-0441">Lipid A biosynthesis</keyword>
<keyword id="KW-0444">Lipid biosynthesis</keyword>
<keyword id="KW-0443">Lipid metabolism</keyword>
<keyword id="KW-0496">Mitochondrion</keyword>
<keyword id="KW-1185">Reference proteome</keyword>
<keyword id="KW-0808">Transferase</keyword>
<keyword id="KW-0809">Transit peptide</keyword>
<accession>F4JGP6</accession>
<accession>Q9M0X4</accession>
<protein>
    <recommendedName>
        <fullName>Probable UDP-3-O-acylglucosamine N-acyltransferase 1, mitochondrial</fullName>
        <ecNumber>2.3.1.191</ecNumber>
    </recommendedName>
    <alternativeName>
        <fullName>Protein LIPID X D1</fullName>
        <shortName>AtLpxD1</shortName>
    </alternativeName>
</protein>
<feature type="transit peptide" description="Mitochondrion" evidence="2">
    <location>
        <begin position="1"/>
        <end position="52"/>
    </location>
</feature>
<feature type="chain" id="PRO_0000421458" description="Probable UDP-3-O-acylglucosamine N-acyltransferase 1, mitochondrial">
    <location>
        <begin position="53"/>
        <end position="330"/>
    </location>
</feature>
<feature type="active site" description="Proton acceptor" evidence="1">
    <location>
        <position position="217"/>
    </location>
</feature>
<feature type="binding site" evidence="1">
    <location>
        <begin position="160"/>
        <end position="162"/>
    </location>
    <ligand>
        <name>UDP-N-acetyl-alpha-D-glucosamine</name>
        <dbReference type="ChEBI" id="CHEBI:57705"/>
    </ligand>
</feature>
<feature type="binding site" evidence="1">
    <location>
        <position position="210"/>
    </location>
    <ligand>
        <name>hexadecanoate</name>
        <dbReference type="ChEBI" id="CHEBI:7896"/>
    </ligand>
</feature>
<feature type="binding site" evidence="1">
    <location>
        <position position="214"/>
    </location>
    <ligand>
        <name>hexadecanoate</name>
        <dbReference type="ChEBI" id="CHEBI:7896"/>
    </ligand>
</feature>
<feature type="binding site" evidence="1">
    <location>
        <position position="218"/>
    </location>
    <ligand>
        <name>UDP-N-acetyl-alpha-D-glucosamine</name>
        <dbReference type="ChEBI" id="CHEBI:57705"/>
    </ligand>
</feature>
<feature type="binding site" evidence="1">
    <location>
        <position position="236"/>
    </location>
    <ligand>
        <name>UDP-N-acetyl-alpha-D-glucosamine</name>
        <dbReference type="ChEBI" id="CHEBI:57705"/>
    </ligand>
</feature>
<feature type="binding site" evidence="1">
    <location>
        <position position="254"/>
    </location>
    <ligand>
        <name>UDP-N-acetyl-alpha-D-glucosamine</name>
        <dbReference type="ChEBI" id="CHEBI:57705"/>
    </ligand>
</feature>
<feature type="site" description="Participates in a stacking interaction with the uracil ring of UDP-GlcNAc" evidence="1">
    <location>
        <position position="9"/>
    </location>
</feature>
<dbReference type="EC" id="2.3.1.191"/>
<dbReference type="EMBL" id="AL161503">
    <property type="protein sequence ID" value="CAB81063.1"/>
    <property type="status" value="ALT_SEQ"/>
    <property type="molecule type" value="Genomic_DNA"/>
</dbReference>
<dbReference type="EMBL" id="CP002687">
    <property type="protein sequence ID" value="AEE82491.1"/>
    <property type="molecule type" value="Genomic_DNA"/>
</dbReference>
<dbReference type="PIR" id="E85065">
    <property type="entry name" value="E85065"/>
</dbReference>
<dbReference type="RefSeq" id="NP_192430.2">
    <property type="nucleotide sequence ID" value="NM_116760.2"/>
</dbReference>
<dbReference type="SMR" id="F4JGP6"/>
<dbReference type="FunCoup" id="F4JGP6">
    <property type="interactions" value="45"/>
</dbReference>
<dbReference type="STRING" id="3702.F4JGP6"/>
<dbReference type="PaxDb" id="3702-AT4G05210.1"/>
<dbReference type="EnsemblPlants" id="AT4G05210.1">
    <property type="protein sequence ID" value="AT4G05210.1"/>
    <property type="gene ID" value="AT4G05210"/>
</dbReference>
<dbReference type="GeneID" id="825869"/>
<dbReference type="Gramene" id="AT4G05210.1">
    <property type="protein sequence ID" value="AT4G05210.1"/>
    <property type="gene ID" value="AT4G05210"/>
</dbReference>
<dbReference type="KEGG" id="ath:AT4G05210"/>
<dbReference type="Araport" id="AT4G05210"/>
<dbReference type="TAIR" id="AT4G05210">
    <property type="gene designation" value="LPXD1"/>
</dbReference>
<dbReference type="eggNOG" id="ENOG502QV70">
    <property type="taxonomic scope" value="Eukaryota"/>
</dbReference>
<dbReference type="HOGENOM" id="CLU_049865_3_2_1"/>
<dbReference type="InParanoid" id="F4JGP6"/>
<dbReference type="BRENDA" id="2.3.1.191">
    <property type="organism ID" value="399"/>
</dbReference>
<dbReference type="UniPathway" id="UPA00359">
    <property type="reaction ID" value="UER00479"/>
</dbReference>
<dbReference type="PRO" id="PR:F4JGP6"/>
<dbReference type="Proteomes" id="UP000006548">
    <property type="component" value="Chromosome 4"/>
</dbReference>
<dbReference type="ExpressionAtlas" id="F4JGP6">
    <property type="expression patterns" value="baseline and differential"/>
</dbReference>
<dbReference type="GO" id="GO:0016020">
    <property type="term" value="C:membrane"/>
    <property type="evidence" value="ECO:0007669"/>
    <property type="project" value="GOC"/>
</dbReference>
<dbReference type="GO" id="GO:0005739">
    <property type="term" value="C:mitochondrion"/>
    <property type="evidence" value="ECO:0000314"/>
    <property type="project" value="UniProtKB"/>
</dbReference>
<dbReference type="GO" id="GO:0016410">
    <property type="term" value="F:N-acyltransferase activity"/>
    <property type="evidence" value="ECO:0007669"/>
    <property type="project" value="InterPro"/>
</dbReference>
<dbReference type="GO" id="GO:0103118">
    <property type="term" value="F:UDP-3-O-(R-3-hydroxymyristoyl)-glucosamine N-acyltransferase activity"/>
    <property type="evidence" value="ECO:0000315"/>
    <property type="project" value="UniProtKB"/>
</dbReference>
<dbReference type="GO" id="GO:0009245">
    <property type="term" value="P:lipid A biosynthetic process"/>
    <property type="evidence" value="ECO:0007669"/>
    <property type="project" value="UniProtKB-KW"/>
</dbReference>
<dbReference type="GO" id="GO:2001289">
    <property type="term" value="P:lipid X metabolic process"/>
    <property type="evidence" value="ECO:0000315"/>
    <property type="project" value="UniProtKB"/>
</dbReference>
<dbReference type="CDD" id="cd03352">
    <property type="entry name" value="LbH_LpxD"/>
    <property type="match status" value="1"/>
</dbReference>
<dbReference type="Gene3D" id="2.160.10.10">
    <property type="entry name" value="Hexapeptide repeat proteins"/>
    <property type="match status" value="1"/>
</dbReference>
<dbReference type="InterPro" id="IPR001451">
    <property type="entry name" value="Hexapep"/>
</dbReference>
<dbReference type="InterPro" id="IPR018357">
    <property type="entry name" value="Hexapep_transf_CS"/>
</dbReference>
<dbReference type="InterPro" id="IPR007691">
    <property type="entry name" value="LpxD"/>
</dbReference>
<dbReference type="InterPro" id="IPR011004">
    <property type="entry name" value="Trimer_LpxA-like_sf"/>
</dbReference>
<dbReference type="NCBIfam" id="NF002060">
    <property type="entry name" value="PRK00892.1"/>
    <property type="match status" value="1"/>
</dbReference>
<dbReference type="PANTHER" id="PTHR43378">
    <property type="entry name" value="UDP-3-O-ACYLGLUCOSAMINE N-ACYLTRANSFERASE"/>
    <property type="match status" value="1"/>
</dbReference>
<dbReference type="PANTHER" id="PTHR43378:SF2">
    <property type="entry name" value="UDP-3-O-ACYLGLUCOSAMINE N-ACYLTRANSFERASE 1, MITOCHONDRIAL-RELATED"/>
    <property type="match status" value="1"/>
</dbReference>
<dbReference type="Pfam" id="PF00132">
    <property type="entry name" value="Hexapep"/>
    <property type="match status" value="2"/>
</dbReference>
<dbReference type="SUPFAM" id="SSF51161">
    <property type="entry name" value="Trimeric LpxA-like enzymes"/>
    <property type="match status" value="1"/>
</dbReference>
<dbReference type="PROSITE" id="PS00101">
    <property type="entry name" value="HEXAPEP_TRANSFERASES"/>
    <property type="match status" value="1"/>
</dbReference>
<gene>
    <name type="primary">LPXD1</name>
    <name type="ordered locus">At4g05210</name>
    <name type="ORF">C17L7.130</name>
</gene>